<keyword id="KW-0333">Golgi apparatus</keyword>
<keyword id="KW-0472">Membrane</keyword>
<keyword id="KW-0597">Phosphoprotein</keyword>
<keyword id="KW-0653">Protein transport</keyword>
<keyword id="KW-1185">Reference proteome</keyword>
<keyword id="KW-0677">Repeat</keyword>
<keyword id="KW-0813">Transport</keyword>
<name>DOP1_YEAST</name>
<organism>
    <name type="scientific">Saccharomyces cerevisiae (strain ATCC 204508 / S288c)</name>
    <name type="common">Baker's yeast</name>
    <dbReference type="NCBI Taxonomy" id="559292"/>
    <lineage>
        <taxon>Eukaryota</taxon>
        <taxon>Fungi</taxon>
        <taxon>Dikarya</taxon>
        <taxon>Ascomycota</taxon>
        <taxon>Saccharomycotina</taxon>
        <taxon>Saccharomycetes</taxon>
        <taxon>Saccharomycetales</taxon>
        <taxon>Saccharomycetaceae</taxon>
        <taxon>Saccharomyces</taxon>
    </lineage>
</organism>
<protein>
    <recommendedName>
        <fullName>Protein DOP1</fullName>
    </recommendedName>
</protein>
<reference key="1">
    <citation type="journal article" date="1997" name="Nature">
        <title>The nucleotide sequence of Saccharomyces cerevisiae chromosome IV.</title>
        <authorList>
            <person name="Jacq C."/>
            <person name="Alt-Moerbe J."/>
            <person name="Andre B."/>
            <person name="Arnold W."/>
            <person name="Bahr A."/>
            <person name="Ballesta J.P.G."/>
            <person name="Bargues M."/>
            <person name="Baron L."/>
            <person name="Becker A."/>
            <person name="Biteau N."/>
            <person name="Bloecker H."/>
            <person name="Blugeon C."/>
            <person name="Boskovic J."/>
            <person name="Brandt P."/>
            <person name="Brueckner M."/>
            <person name="Buitrago M.J."/>
            <person name="Coster F."/>
            <person name="Delaveau T."/>
            <person name="del Rey F."/>
            <person name="Dujon B."/>
            <person name="Eide L.G."/>
            <person name="Garcia-Cantalejo J.M."/>
            <person name="Goffeau A."/>
            <person name="Gomez-Peris A."/>
            <person name="Granotier C."/>
            <person name="Hanemann V."/>
            <person name="Hankeln T."/>
            <person name="Hoheisel J.D."/>
            <person name="Jaeger W."/>
            <person name="Jimenez A."/>
            <person name="Jonniaux J.-L."/>
            <person name="Kraemer C."/>
            <person name="Kuester H."/>
            <person name="Laamanen P."/>
            <person name="Legros Y."/>
            <person name="Louis E.J."/>
            <person name="Moeller-Rieker S."/>
            <person name="Monnet A."/>
            <person name="Moro M."/>
            <person name="Mueller-Auer S."/>
            <person name="Nussbaumer B."/>
            <person name="Paricio N."/>
            <person name="Paulin L."/>
            <person name="Perea J."/>
            <person name="Perez-Alonso M."/>
            <person name="Perez-Ortin J.E."/>
            <person name="Pohl T.M."/>
            <person name="Prydz H."/>
            <person name="Purnelle B."/>
            <person name="Rasmussen S.W."/>
            <person name="Remacha M.A."/>
            <person name="Revuelta J.L."/>
            <person name="Rieger M."/>
            <person name="Salom D."/>
            <person name="Saluz H.P."/>
            <person name="Saiz J.E."/>
            <person name="Saren A.-M."/>
            <person name="Schaefer M."/>
            <person name="Scharfe M."/>
            <person name="Schmidt E.R."/>
            <person name="Schneider C."/>
            <person name="Scholler P."/>
            <person name="Schwarz S."/>
            <person name="Soler-Mira A."/>
            <person name="Urrestarazu L.A."/>
            <person name="Verhasselt P."/>
            <person name="Vissers S."/>
            <person name="Voet M."/>
            <person name="Volckaert G."/>
            <person name="Wagner G."/>
            <person name="Wambutt R."/>
            <person name="Wedler E."/>
            <person name="Wedler H."/>
            <person name="Woelfl S."/>
            <person name="Harris D.E."/>
            <person name="Bowman S."/>
            <person name="Brown D."/>
            <person name="Churcher C.M."/>
            <person name="Connor R."/>
            <person name="Dedman K."/>
            <person name="Gentles S."/>
            <person name="Hamlin N."/>
            <person name="Hunt S."/>
            <person name="Jones L."/>
            <person name="McDonald S."/>
            <person name="Murphy L.D."/>
            <person name="Niblett D."/>
            <person name="Odell C."/>
            <person name="Oliver K."/>
            <person name="Rajandream M.A."/>
            <person name="Richards C."/>
            <person name="Shore L."/>
            <person name="Walsh S.V."/>
            <person name="Barrell B.G."/>
            <person name="Dietrich F.S."/>
            <person name="Mulligan J.T."/>
            <person name="Allen E."/>
            <person name="Araujo R."/>
            <person name="Aviles E."/>
            <person name="Berno A."/>
            <person name="Carpenter J."/>
            <person name="Chen E."/>
            <person name="Cherry J.M."/>
            <person name="Chung E."/>
            <person name="Duncan M."/>
            <person name="Hunicke-Smith S."/>
            <person name="Hyman R.W."/>
            <person name="Komp C."/>
            <person name="Lashkari D."/>
            <person name="Lew H."/>
            <person name="Lin D."/>
            <person name="Mosedale D."/>
            <person name="Nakahara K."/>
            <person name="Namath A."/>
            <person name="Oefner P."/>
            <person name="Oh C."/>
            <person name="Petel F.X."/>
            <person name="Roberts D."/>
            <person name="Schramm S."/>
            <person name="Schroeder M."/>
            <person name="Shogren T."/>
            <person name="Shroff N."/>
            <person name="Winant A."/>
            <person name="Yelton M.A."/>
            <person name="Botstein D."/>
            <person name="Davis R.W."/>
            <person name="Johnston M."/>
            <person name="Andrews S."/>
            <person name="Brinkman R."/>
            <person name="Cooper J."/>
            <person name="Ding H."/>
            <person name="Du Z."/>
            <person name="Favello A."/>
            <person name="Fulton L."/>
            <person name="Gattung S."/>
            <person name="Greco T."/>
            <person name="Hallsworth K."/>
            <person name="Hawkins J."/>
            <person name="Hillier L.W."/>
            <person name="Jier M."/>
            <person name="Johnson D."/>
            <person name="Johnston L."/>
            <person name="Kirsten J."/>
            <person name="Kucaba T."/>
            <person name="Langston Y."/>
            <person name="Latreille P."/>
            <person name="Le T."/>
            <person name="Mardis E."/>
            <person name="Menezes S."/>
            <person name="Miller N."/>
            <person name="Nhan M."/>
            <person name="Pauley A."/>
            <person name="Peluso D."/>
            <person name="Rifkin L."/>
            <person name="Riles L."/>
            <person name="Taich A."/>
            <person name="Trevaskis E."/>
            <person name="Vignati D."/>
            <person name="Wilcox L."/>
            <person name="Wohldman P."/>
            <person name="Vaudin M."/>
            <person name="Wilson R."/>
            <person name="Waterston R."/>
            <person name="Albermann K."/>
            <person name="Hani J."/>
            <person name="Heumann K."/>
            <person name="Kleine K."/>
            <person name="Mewes H.-W."/>
            <person name="Zollner A."/>
            <person name="Zaccaria P."/>
        </authorList>
    </citation>
    <scope>NUCLEOTIDE SEQUENCE [LARGE SCALE GENOMIC DNA]</scope>
    <source>
        <strain>ATCC 204508 / S288c</strain>
    </source>
</reference>
<reference key="2">
    <citation type="journal article" date="2014" name="G3 (Bethesda)">
        <title>The reference genome sequence of Saccharomyces cerevisiae: Then and now.</title>
        <authorList>
            <person name="Engel S.R."/>
            <person name="Dietrich F.S."/>
            <person name="Fisk D.G."/>
            <person name="Binkley G."/>
            <person name="Balakrishnan R."/>
            <person name="Costanzo M.C."/>
            <person name="Dwight S.S."/>
            <person name="Hitz B.C."/>
            <person name="Karra K."/>
            <person name="Nash R.S."/>
            <person name="Weng S."/>
            <person name="Wong E.D."/>
            <person name="Lloyd P."/>
            <person name="Skrzypek M.S."/>
            <person name="Miyasato S.R."/>
            <person name="Simison M."/>
            <person name="Cherry J.M."/>
        </authorList>
    </citation>
    <scope>GENOME REANNOTATION</scope>
    <source>
        <strain>ATCC 204508 / S288c</strain>
    </source>
</reference>
<reference key="3">
    <citation type="journal article" date="2000" name="Mol. Microbiol.">
        <title>Morphogenesis in Aspergillus nidulans requires Dopey (DopA), a member of a novel family of leucine zipper-like proteins conserved from yeast to humans.</title>
        <authorList>
            <person name="Pascon R.C."/>
            <person name="Miller B.L."/>
        </authorList>
    </citation>
    <scope>FUNCTION</scope>
</reference>
<reference key="4">
    <citation type="journal article" date="2003" name="Nature">
        <title>Global analysis of protein localization in budding yeast.</title>
        <authorList>
            <person name="Huh W.-K."/>
            <person name="Falvo J.V."/>
            <person name="Gerke L.C."/>
            <person name="Carroll A.S."/>
            <person name="Howson R.W."/>
            <person name="Weissman J.S."/>
            <person name="O'Shea E.K."/>
        </authorList>
    </citation>
    <scope>SUBCELLULAR LOCATION [LARGE SCALE ANALYSIS]</scope>
</reference>
<reference key="5">
    <citation type="journal article" date="2003" name="Nature">
        <title>Global analysis of protein expression in yeast.</title>
        <authorList>
            <person name="Ghaemmaghami S."/>
            <person name="Huh W.-K."/>
            <person name="Bower K."/>
            <person name="Howson R.W."/>
            <person name="Belle A."/>
            <person name="Dephoure N."/>
            <person name="O'Shea E.K."/>
            <person name="Weissman J.S."/>
        </authorList>
    </citation>
    <scope>LEVEL OF PROTEIN EXPRESSION [LARGE SCALE ANALYSIS]</scope>
</reference>
<reference key="6">
    <citation type="journal article" date="2005" name="J. Cell Sci.">
        <title>Yeast Mon2p is a highly conserved protein that functions in the cytoplasm-to-vacuole transport pathway and is required for Golgi homeostasis.</title>
        <authorList>
            <person name="Efe J.A."/>
            <person name="Plattner F."/>
            <person name="Hulo N."/>
            <person name="Kressler D."/>
            <person name="Emr S.D."/>
            <person name="Deloche O."/>
        </authorList>
    </citation>
    <scope>SUBCELLULAR LOCATION</scope>
    <scope>INTERACTION WITH MON2</scope>
</reference>
<reference key="7">
    <citation type="journal article" date="2006" name="J. Biol. Chem.">
        <title>Mon2, a relative of large Arf exchange factors, recruits Dop1 to the Golgi apparatus.</title>
        <authorList>
            <person name="Gillingham A.K."/>
            <person name="Whyte J.R.C."/>
            <person name="Panic B."/>
            <person name="Munro S."/>
        </authorList>
    </citation>
    <scope>INTERACTION WITH MON2</scope>
    <scope>SUBCELLULAR LOCATION</scope>
    <scope>FUNCTION</scope>
</reference>
<reference key="8">
    <citation type="journal article" date="2007" name="J. Proteome Res.">
        <title>Large-scale phosphorylation analysis of alpha-factor-arrested Saccharomyces cerevisiae.</title>
        <authorList>
            <person name="Li X."/>
            <person name="Gerber S.A."/>
            <person name="Rudner A.D."/>
            <person name="Beausoleil S.A."/>
            <person name="Haas W."/>
            <person name="Villen J."/>
            <person name="Elias J.E."/>
            <person name="Gygi S.P."/>
        </authorList>
    </citation>
    <scope>IDENTIFICATION BY MASS SPECTROMETRY [LARGE SCALE ANALYSIS]</scope>
    <source>
        <strain>ADR376</strain>
    </source>
</reference>
<reference key="9">
    <citation type="journal article" date="2008" name="Mol. Cell. Proteomics">
        <title>A multidimensional chromatography technology for in-depth phosphoproteome analysis.</title>
        <authorList>
            <person name="Albuquerque C.P."/>
            <person name="Smolka M.B."/>
            <person name="Payne S.H."/>
            <person name="Bafna V."/>
            <person name="Eng J."/>
            <person name="Zhou H."/>
        </authorList>
    </citation>
    <scope>PHOSPHORYLATION [LARGE SCALE ANALYSIS] AT SER-244</scope>
    <scope>IDENTIFICATION BY MASS SPECTROMETRY [LARGE SCALE ANALYSIS]</scope>
</reference>
<reference key="10">
    <citation type="journal article" date="2009" name="Science">
        <title>Global analysis of Cdk1 substrate phosphorylation sites provides insights into evolution.</title>
        <authorList>
            <person name="Holt L.J."/>
            <person name="Tuch B.B."/>
            <person name="Villen J."/>
            <person name="Johnson A.D."/>
            <person name="Gygi S.P."/>
            <person name="Morgan D.O."/>
        </authorList>
    </citation>
    <scope>PHOSPHORYLATION [LARGE SCALE ANALYSIS] AT SER-244</scope>
    <scope>IDENTIFICATION BY MASS SPECTROMETRY [LARGE SCALE ANALYSIS]</scope>
</reference>
<reference key="11">
    <citation type="journal article" date="2017" name="Mol. Biol. Cell">
        <title>Quantitative high-content imaging identifies novel regulators of Neo1 trafficking at endosomes.</title>
        <authorList>
            <person name="Dalton L.E."/>
            <person name="Bean B.D.M."/>
            <person name="Davey M."/>
            <person name="Conibear E."/>
        </authorList>
    </citation>
    <scope>INTERACTION WITH MON2</scope>
</reference>
<gene>
    <name type="primary">DOP1</name>
    <name type="ordered locus">YDR141C</name>
    <name type="ORF">YD9302.17C</name>
</gene>
<sequence>MSLPLKPLTIDSNNKQLDSKQKKFRANVERALERFDSVTEWADYIASLGTLLKALQSWSPKFQNVRYYVPSPYQVSRRLTSSLSPALPAGVHQKTLEVYTYIFEHIGLETLATECNIWIPGILPLMTYASMSVRSHLIELYDNYILLLPQTTLRLLIRPLISSLLPGIDDESNDFLPLTLKLIETLQENLDDDSLFWQTLFLVMTANKGRRLGGLTWLTRKFPSLNAVPHLVNKIKMEAEENPSETETNDSHLDRKKRKEEAFKVLLPAAKDLVTPEPGLLIRCLVGCLEDENDILIKRSVLDLLLQRLRLDSPVLNVLITSEDKKLLIMSCCRTTLSKDMSLNRRIWNWLLGPTAGGMLNNNGGNSMEYTTSVKSANEESNVYFTKYGLSALLEGLSDLLSEEESVLTAFRISMAVMDRWEIGSLVIPELFIPLLYSSEKFKQNEQIMKTARTFFDNTETNIIWGKLFQELEDIKNLKILDFVLTNFNIGNDEEIIVRHLPLILLTLLALPSNDKDFDNIYKLQKFSLYNKLLNYIPERALLPLSHSKLKHDDEVSCEELLAKIRGFYTNVSNPSSILEKENIAERLPPFTTEDLTFLIADLIQKKLLSSLWDLENINESSKLFIAIFEKIPESEELKGRSHISWSDKKITQSIFEAIPRLCESNNDAKSEEIVGIVEIFGNYLYSRMEFIESMKLLKVVMMAVWKSLKDPRHQILGVKNLKTLNRFIPSKFIESALVYTFVEEEDISERLSVLDLLWTQLDSDSNLIRRPLELILGELFDDQNPFYLTVSKWILSILNSGSASRLFYILTDNILKVNRLEKERLDERDDLDMLTYEFQMLAYVLKTNNGRTRKVFSTELTSIKSSTIWKNEDVSTYKSLLLVTLMRFLNIKSNTHAKSIRSALILLDILLDGTEQNFKDIVIFLLQMSSKYIAEEGIEPELIAVSLLDIVSKVLRLSHDNGIKLDIFDDNAAHLKYIDFLVTSVSNMKSPLIVTAYVKLLSESIVYFENSIFRMILPLSASLVQCVQRLFLLEKREGGYYQPIALLLGGLEELLEISHGYLVTEEREGYFSGSNLKGDFIQSVVSNVFSSDSSNEESKIQGERDVILQSFRQVISCCLDIWYWAHNISCKSNDDSSLDATNHNSYKFKFRSKKLLETLFLLEPLELLENLISIRSDNTTVTLVHVLDGNKPAITIPHLLYGVIIRYNRTASVKFSNRDGSRSSTTKLTKGEPSMLKRLSGESIIAFLFNYVDSVENSAMEEFYGDFLLFFREVATNYNLYSDVSLSILKLVALISGKVSKTQFGEQKRVRREISDVFFKYLPNAFINFTNLYRGHPDSFKDLEFVVWRVQYIVNDQIGGDKFNTTLATIVNQCLTPYIKPKSEKTIPGYVLELAAVVSHLGSKVKSWRLLIAELFQNDKKLSVIGSDQTWEKIIYEWSIYPENKSKILNDLLLEIGSKRSSVTPTLITFNLGSDSEVEYKCQNLLKISYLLMVSPNDAYLLHFSSLISCIFHYLVSKDIKLKGSCWILLRVLLLRFSESHFNDYWSMISYCLQTNLQEFYESLQIQSEVDPQTILQVCKTLDLLLLLNMEGFTSTNEWIFVIDTINCVYKTNSFVALVDEIAEFKDYEITKTDDLELPTTLKDGLPLLRGIHKIERHTQLRSFFQNLSYLHYEKVYGLGSVDLYGCGEDLKKDILS</sequence>
<evidence type="ECO:0000269" key="1">
    <source>
    </source>
</evidence>
<evidence type="ECO:0000269" key="2">
    <source>
    </source>
</evidence>
<evidence type="ECO:0000269" key="3">
    <source>
    </source>
</evidence>
<evidence type="ECO:0000269" key="4">
    <source>
    </source>
</evidence>
<evidence type="ECO:0000269" key="5">
    <source>
    </source>
</evidence>
<evidence type="ECO:0000269" key="6">
    <source>
    </source>
</evidence>
<evidence type="ECO:0000305" key="7"/>
<evidence type="ECO:0007744" key="8">
    <source>
    </source>
</evidence>
<evidence type="ECO:0007744" key="9">
    <source>
    </source>
</evidence>
<dbReference type="EMBL" id="Z48179">
    <property type="protein sequence ID" value="CAA88223.1"/>
    <property type="molecule type" value="Genomic_DNA"/>
</dbReference>
<dbReference type="EMBL" id="BK006938">
    <property type="protein sequence ID" value="DAA11984.1"/>
    <property type="molecule type" value="Genomic_DNA"/>
</dbReference>
<dbReference type="PIR" id="S51869">
    <property type="entry name" value="S51869"/>
</dbReference>
<dbReference type="RefSeq" id="NP_010425.1">
    <property type="nucleotide sequence ID" value="NM_001180448.1"/>
</dbReference>
<dbReference type="BioGRID" id="32195">
    <property type="interactions" value="245"/>
</dbReference>
<dbReference type="ComplexPortal" id="CPX-1028">
    <property type="entry name" value="NEO1-MON2-ARL1-DOP1 membrane remodeling complex"/>
</dbReference>
<dbReference type="DIP" id="DIP-2624N"/>
<dbReference type="FunCoup" id="Q03921">
    <property type="interactions" value="144"/>
</dbReference>
<dbReference type="IntAct" id="Q03921">
    <property type="interactions" value="20"/>
</dbReference>
<dbReference type="MINT" id="Q03921"/>
<dbReference type="STRING" id="4932.YDR141C"/>
<dbReference type="GlyGen" id="Q03921">
    <property type="glycosylation" value="1 site"/>
</dbReference>
<dbReference type="iPTMnet" id="Q03921"/>
<dbReference type="PaxDb" id="4932-YDR141C"/>
<dbReference type="PeptideAtlas" id="Q03921"/>
<dbReference type="EnsemblFungi" id="YDR141C_mRNA">
    <property type="protein sequence ID" value="YDR141C"/>
    <property type="gene ID" value="YDR141C"/>
</dbReference>
<dbReference type="GeneID" id="851719"/>
<dbReference type="KEGG" id="sce:YDR141C"/>
<dbReference type="AGR" id="SGD:S000002548"/>
<dbReference type="SGD" id="S000002548">
    <property type="gene designation" value="DOP1"/>
</dbReference>
<dbReference type="VEuPathDB" id="FungiDB:YDR141C"/>
<dbReference type="eggNOG" id="KOG3613">
    <property type="taxonomic scope" value="Eukaryota"/>
</dbReference>
<dbReference type="GeneTree" id="ENSGT00390000016421"/>
<dbReference type="HOGENOM" id="CLU_001197_1_0_1"/>
<dbReference type="InParanoid" id="Q03921"/>
<dbReference type="OMA" id="SHFNDYW"/>
<dbReference type="OrthoDB" id="297643at2759"/>
<dbReference type="BioCyc" id="YEAST:G3O-29738-MONOMER"/>
<dbReference type="BioGRID-ORCS" id="851719">
    <property type="hits" value="2 hits in 10 CRISPR screens"/>
</dbReference>
<dbReference type="PRO" id="PR:Q03921"/>
<dbReference type="Proteomes" id="UP000002311">
    <property type="component" value="Chromosome IV"/>
</dbReference>
<dbReference type="RNAct" id="Q03921">
    <property type="molecule type" value="protein"/>
</dbReference>
<dbReference type="GO" id="GO:0005737">
    <property type="term" value="C:cytoplasm"/>
    <property type="evidence" value="ECO:0007005"/>
    <property type="project" value="SGD"/>
</dbReference>
<dbReference type="GO" id="GO:0005829">
    <property type="term" value="C:cytosol"/>
    <property type="evidence" value="ECO:0007005"/>
    <property type="project" value="SGD"/>
</dbReference>
<dbReference type="GO" id="GO:0005768">
    <property type="term" value="C:endosome"/>
    <property type="evidence" value="ECO:0000314"/>
    <property type="project" value="SGD"/>
</dbReference>
<dbReference type="GO" id="GO:0010008">
    <property type="term" value="C:endosome membrane"/>
    <property type="evidence" value="ECO:0000303"/>
    <property type="project" value="ComplexPortal"/>
</dbReference>
<dbReference type="GO" id="GO:0000139">
    <property type="term" value="C:Golgi membrane"/>
    <property type="evidence" value="ECO:0000314"/>
    <property type="project" value="HGNC-UCL"/>
</dbReference>
<dbReference type="GO" id="GO:0005739">
    <property type="term" value="C:mitochondrion"/>
    <property type="evidence" value="ECO:0007005"/>
    <property type="project" value="SGD"/>
</dbReference>
<dbReference type="GO" id="GO:0005802">
    <property type="term" value="C:trans-Golgi network"/>
    <property type="evidence" value="ECO:0000314"/>
    <property type="project" value="SGD"/>
</dbReference>
<dbReference type="GO" id="GO:0042802">
    <property type="term" value="F:identical protein binding"/>
    <property type="evidence" value="ECO:0000353"/>
    <property type="project" value="IntAct"/>
</dbReference>
<dbReference type="GO" id="GO:0000902">
    <property type="term" value="P:cell morphogenesis"/>
    <property type="evidence" value="ECO:0000315"/>
    <property type="project" value="SGD"/>
</dbReference>
<dbReference type="GO" id="GO:0007029">
    <property type="term" value="P:endoplasmic reticulum organization"/>
    <property type="evidence" value="ECO:0000315"/>
    <property type="project" value="HGNC-UCL"/>
</dbReference>
<dbReference type="GO" id="GO:0006895">
    <property type="term" value="P:Golgi to endosome transport"/>
    <property type="evidence" value="ECO:0000315"/>
    <property type="project" value="HGNC-UCL"/>
</dbReference>
<dbReference type="GO" id="GO:0015031">
    <property type="term" value="P:protein transport"/>
    <property type="evidence" value="ECO:0007669"/>
    <property type="project" value="UniProtKB-KW"/>
</dbReference>
<dbReference type="GO" id="GO:0042147">
    <property type="term" value="P:retrograde transport, endosome to Golgi"/>
    <property type="evidence" value="ECO:0000315"/>
    <property type="project" value="SGD"/>
</dbReference>
<dbReference type="GO" id="GO:0000301">
    <property type="term" value="P:retrograde transport, vesicle recycling within Golgi"/>
    <property type="evidence" value="ECO:0000315"/>
    <property type="project" value="SGD"/>
</dbReference>
<dbReference type="GO" id="GO:0098629">
    <property type="term" value="P:trans-Golgi network membrane organization"/>
    <property type="evidence" value="ECO:0000303"/>
    <property type="project" value="ComplexPortal"/>
</dbReference>
<dbReference type="InterPro" id="IPR016024">
    <property type="entry name" value="ARM-type_fold"/>
</dbReference>
<dbReference type="InterPro" id="IPR040314">
    <property type="entry name" value="DOP1"/>
</dbReference>
<dbReference type="InterPro" id="IPR056457">
    <property type="entry name" value="DOP1_C"/>
</dbReference>
<dbReference type="InterPro" id="IPR007249">
    <property type="entry name" value="DOP1_N"/>
</dbReference>
<dbReference type="InterPro" id="IPR056458">
    <property type="entry name" value="TPR_DOP1_M"/>
</dbReference>
<dbReference type="PANTHER" id="PTHR14042">
    <property type="entry name" value="DOPEY-RELATED"/>
    <property type="match status" value="1"/>
</dbReference>
<dbReference type="PANTHER" id="PTHR14042:SF24">
    <property type="entry name" value="PROTEIN DOPEY-1 HOMOLOG"/>
    <property type="match status" value="1"/>
</dbReference>
<dbReference type="Pfam" id="PF24598">
    <property type="entry name" value="DOP1_C"/>
    <property type="match status" value="1"/>
</dbReference>
<dbReference type="Pfam" id="PF04118">
    <property type="entry name" value="Dopey_N"/>
    <property type="match status" value="1"/>
</dbReference>
<dbReference type="Pfam" id="PF24597">
    <property type="entry name" value="TPR_DOP1_M"/>
    <property type="match status" value="1"/>
</dbReference>
<dbReference type="SUPFAM" id="SSF48371">
    <property type="entry name" value="ARM repeat"/>
    <property type="match status" value="1"/>
</dbReference>
<accession>Q03921</accession>
<accession>D6VSC4</accession>
<proteinExistence type="evidence at protein level"/>
<feature type="chain" id="PRO_0000190976" description="Protein DOP1">
    <location>
        <begin position="1"/>
        <end position="1698"/>
    </location>
</feature>
<feature type="modified residue" description="Phosphoserine" evidence="8 9">
    <location>
        <position position="244"/>
    </location>
</feature>
<comment type="function">
    <text evidence="1 5">Required for traffic between late Golgi and early endosomes, and for the normal structure and organization of the endoplasmic reticulum (PubMed:16301316). Required for normal cellular morphogenesis (PubMed:10931277).</text>
</comment>
<comment type="subunit">
    <text evidence="4 5 6">Interacts with MON2.</text>
</comment>
<comment type="interaction">
    <interactant intactId="EBI-34442">
        <id>Q03921</id>
    </interactant>
    <interactant intactId="EBI-34442">
        <id>Q03921</id>
        <label>DOP1</label>
    </interactant>
    <organismsDiffer>false</organismsDiffer>
    <experiments>2</experiments>
</comment>
<comment type="interaction">
    <interactant intactId="EBI-34442">
        <id>Q03921</id>
    </interactant>
    <interactant intactId="EBI-28333">
        <id>P48563</id>
        <label>MON2</label>
    </interactant>
    <organismsDiffer>false</organismsDiffer>
    <experiments>6</experiments>
</comment>
<comment type="interaction">
    <interactant intactId="EBI-34442">
        <id>Q03921</id>
    </interactant>
    <interactant intactId="EBI-3137">
        <id>P40527</id>
        <label>NEO1</label>
    </interactant>
    <organismsDiffer>false</organismsDiffer>
    <experiments>3</experiments>
</comment>
<comment type="subcellular location">
    <subcellularLocation>
        <location evidence="2 4 5">Golgi apparatus membrane</location>
        <topology evidence="2 4 5">Peripheral membrane protein</topology>
    </subcellularLocation>
    <text>Late Golgi.</text>
</comment>
<comment type="miscellaneous">
    <text evidence="3">Present with 2700 molecules/cell in log phase SD medium.</text>
</comment>
<comment type="similarity">
    <text evidence="7">Belongs to the DOP1 family.</text>
</comment>